<proteinExistence type="evidence at transcript level"/>
<keyword id="KW-0304">Gas vesicle</keyword>
<keyword id="KW-1185">Reference proteome</keyword>
<dbReference type="EMBL" id="AL939106">
    <property type="protein sequence ID" value="CAB61172.1"/>
    <property type="molecule type" value="Genomic_DNA"/>
</dbReference>
<dbReference type="RefSeq" id="NP_624964.1">
    <property type="nucleotide sequence ID" value="NC_003888.3"/>
</dbReference>
<dbReference type="RefSeq" id="WP_003978207.1">
    <property type="nucleotide sequence ID" value="NZ_VNID01000004.1"/>
</dbReference>
<dbReference type="SMR" id="Q9RJA9"/>
<dbReference type="STRING" id="100226.gene:17758238"/>
<dbReference type="PaxDb" id="100226-SCO0655"/>
<dbReference type="KEGG" id="sco:SCO0655"/>
<dbReference type="PATRIC" id="fig|100226.15.peg.639"/>
<dbReference type="eggNOG" id="ENOG503303G">
    <property type="taxonomic scope" value="Bacteria"/>
</dbReference>
<dbReference type="HOGENOM" id="CLU_107602_2_2_11"/>
<dbReference type="InParanoid" id="Q9RJA9"/>
<dbReference type="Proteomes" id="UP000001973">
    <property type="component" value="Chromosome"/>
</dbReference>
<dbReference type="GO" id="GO:0031411">
    <property type="term" value="C:gas vesicle"/>
    <property type="evidence" value="ECO:0007669"/>
    <property type="project" value="UniProtKB-SubCell"/>
</dbReference>
<dbReference type="GO" id="GO:0012506">
    <property type="term" value="C:vesicle membrane"/>
    <property type="evidence" value="ECO:0007669"/>
    <property type="project" value="InterPro"/>
</dbReference>
<dbReference type="GO" id="GO:0005198">
    <property type="term" value="F:structural molecule activity"/>
    <property type="evidence" value="ECO:0007669"/>
    <property type="project" value="InterPro"/>
</dbReference>
<dbReference type="InterPro" id="IPR000638">
    <property type="entry name" value="Gas-vesicle_GvpA-like"/>
</dbReference>
<dbReference type="InterPro" id="IPR050530">
    <property type="entry name" value="GvpA"/>
</dbReference>
<dbReference type="InterPro" id="IPR018493">
    <property type="entry name" value="GvpA-like_CS"/>
</dbReference>
<dbReference type="PANTHER" id="PTHR35344:SF4">
    <property type="entry name" value="GAS VESICLE PROTEIN A1"/>
    <property type="match status" value="1"/>
</dbReference>
<dbReference type="PANTHER" id="PTHR35344">
    <property type="entry name" value="GAS VESICLE STRUCTURAL PROTEIN 2-RELATED"/>
    <property type="match status" value="1"/>
</dbReference>
<dbReference type="Pfam" id="PF00741">
    <property type="entry name" value="Gas_vesicle"/>
    <property type="match status" value="1"/>
</dbReference>
<dbReference type="PROSITE" id="PS00234">
    <property type="entry name" value="GAS_VESICLE_A_1"/>
    <property type="match status" value="1"/>
</dbReference>
<protein>
    <recommendedName>
        <fullName>Probable gas vesicle protein J2</fullName>
        <shortName>GvpJ2</shortName>
    </recommendedName>
</protein>
<organism>
    <name type="scientific">Streptomyces coelicolor (strain ATCC BAA-471 / A3(2) / M145)</name>
    <dbReference type="NCBI Taxonomy" id="100226"/>
    <lineage>
        <taxon>Bacteria</taxon>
        <taxon>Bacillati</taxon>
        <taxon>Actinomycetota</taxon>
        <taxon>Actinomycetes</taxon>
        <taxon>Kitasatosporales</taxon>
        <taxon>Streptomycetaceae</taxon>
        <taxon>Streptomyces</taxon>
        <taxon>Streptomyces albidoflavus group</taxon>
    </lineage>
</organism>
<feature type="chain" id="PRO_0000200001" description="Probable gas vesicle protein J2">
    <location>
        <begin position="1"/>
        <end position="114"/>
    </location>
</feature>
<feature type="region of interest" description="Disordered" evidence="2">
    <location>
        <begin position="1"/>
        <end position="21"/>
    </location>
</feature>
<feature type="compositionally biased region" description="Basic and acidic residues" evidence="2">
    <location>
        <begin position="1"/>
        <end position="10"/>
    </location>
</feature>
<sequence length="114" mass="12443">MTDLDHRYPGEETEPYGPPSGSLADLLERVLDKGIVIAGDIKIDLLDIELLTIRLRLFIASVDTAKKAGIDWWETDPALSSRAARDALAEENARLRERLDALEGAAGETTGAVR</sequence>
<comment type="function">
    <text evidence="1 5">A minor component of the gas vesicle, might be involved in nucleating gas vesicle formation (By similarity). Gas vesicles (GV) are hollow, gas filled proteinaceous nanostructures. It is not clear what function GVs perform in soil bacteria (Probable).</text>
</comment>
<comment type="subunit">
    <text evidence="1">Interacts with GvpA.</text>
</comment>
<comment type="subcellular location">
    <subcellularLocation>
        <location evidence="1">Gas vesicle</location>
    </subcellularLocation>
</comment>
<comment type="induction">
    <text evidence="3">Constitutively transcribed at low levels, repressed by argR.</text>
</comment>
<comment type="similarity">
    <text evidence="5">Belongs to the gas vesicle GvpA family.</text>
</comment>
<evidence type="ECO:0000250" key="1">
    <source>
        <dbReference type="UniProtKB" id="P24374"/>
    </source>
</evidence>
<evidence type="ECO:0000256" key="2">
    <source>
        <dbReference type="SAM" id="MobiDB-lite"/>
    </source>
</evidence>
<evidence type="ECO:0000269" key="3">
    <source>
    </source>
</evidence>
<evidence type="ECO:0000303" key="4">
    <source>
    </source>
</evidence>
<evidence type="ECO:0000305" key="5"/>
<gene>
    <name evidence="4" type="primary">gvpJ2</name>
    <name type="ordered locus">SCO0655</name>
    <name type="ORF">SCF91.15</name>
</gene>
<reference key="1">
    <citation type="journal article" date="2002" name="Nature">
        <title>Complete genome sequence of the model actinomycete Streptomyces coelicolor A3(2).</title>
        <authorList>
            <person name="Bentley S.D."/>
            <person name="Chater K.F."/>
            <person name="Cerdeno-Tarraga A.-M."/>
            <person name="Challis G.L."/>
            <person name="Thomson N.R."/>
            <person name="James K.D."/>
            <person name="Harris D.E."/>
            <person name="Quail M.A."/>
            <person name="Kieser H."/>
            <person name="Harper D."/>
            <person name="Bateman A."/>
            <person name="Brown S."/>
            <person name="Chandra G."/>
            <person name="Chen C.W."/>
            <person name="Collins M."/>
            <person name="Cronin A."/>
            <person name="Fraser A."/>
            <person name="Goble A."/>
            <person name="Hidalgo J."/>
            <person name="Hornsby T."/>
            <person name="Howarth S."/>
            <person name="Huang C.-H."/>
            <person name="Kieser T."/>
            <person name="Larke L."/>
            <person name="Murphy L.D."/>
            <person name="Oliver K."/>
            <person name="O'Neil S."/>
            <person name="Rabbinowitsch E."/>
            <person name="Rajandream M.A."/>
            <person name="Rutherford K.M."/>
            <person name="Rutter S."/>
            <person name="Seeger K."/>
            <person name="Saunders D."/>
            <person name="Sharp S."/>
            <person name="Squares R."/>
            <person name="Squares S."/>
            <person name="Taylor K."/>
            <person name="Warren T."/>
            <person name="Wietzorrek A."/>
            <person name="Woodward J.R."/>
            <person name="Barrell B.G."/>
            <person name="Parkhill J."/>
            <person name="Hopwood D.A."/>
        </authorList>
    </citation>
    <scope>NUCLEOTIDE SEQUENCE [LARGE SCALE GENOMIC DNA]</scope>
    <source>
        <strain>ATCC BAA-471 / A3(2) / M145</strain>
    </source>
</reference>
<reference key="2">
    <citation type="journal article" date="2018" name="Front. Microbiol.">
        <title>ArgR of Streptomyces coelicolor Is a Pleiotropic Transcriptional Regulator: Effect on the Transcriptome, Antibiotic Production, and Differentiation in Liquid Cultures.</title>
        <authorList>
            <person name="Botas A."/>
            <person name="Perez-Redondo R."/>
            <person name="Rodriguez-Garcia A."/>
            <person name="Alvarez-Alvarez R."/>
            <person name="Yaguee P."/>
            <person name="Manteca A."/>
            <person name="Liras P."/>
        </authorList>
    </citation>
    <scope>INDUCTION</scope>
    <source>
        <strain>ATCC BAA-471 / A3(2) / M145</strain>
    </source>
</reference>
<accession>Q9RJA9</accession>
<name>GVPJ2_STRCO</name>